<dbReference type="EMBL" id="CP001068">
    <property type="protein sequence ID" value="ACD26184.1"/>
    <property type="molecule type" value="Genomic_DNA"/>
</dbReference>
<dbReference type="SMR" id="B2U9S6"/>
<dbReference type="STRING" id="402626.Rpic_1036"/>
<dbReference type="KEGG" id="rpi:Rpic_1036"/>
<dbReference type="eggNOG" id="COG0718">
    <property type="taxonomic scope" value="Bacteria"/>
</dbReference>
<dbReference type="HOGENOM" id="CLU_140930_0_0_4"/>
<dbReference type="GO" id="GO:0043590">
    <property type="term" value="C:bacterial nucleoid"/>
    <property type="evidence" value="ECO:0007669"/>
    <property type="project" value="UniProtKB-UniRule"/>
</dbReference>
<dbReference type="GO" id="GO:0005829">
    <property type="term" value="C:cytosol"/>
    <property type="evidence" value="ECO:0007669"/>
    <property type="project" value="TreeGrafter"/>
</dbReference>
<dbReference type="GO" id="GO:0003677">
    <property type="term" value="F:DNA binding"/>
    <property type="evidence" value="ECO:0007669"/>
    <property type="project" value="UniProtKB-UniRule"/>
</dbReference>
<dbReference type="Gene3D" id="3.30.1310.10">
    <property type="entry name" value="Nucleoid-associated protein YbaB-like domain"/>
    <property type="match status" value="1"/>
</dbReference>
<dbReference type="HAMAP" id="MF_00274">
    <property type="entry name" value="DNA_YbaB_EbfC"/>
    <property type="match status" value="1"/>
</dbReference>
<dbReference type="InterPro" id="IPR036894">
    <property type="entry name" value="YbaB-like_sf"/>
</dbReference>
<dbReference type="InterPro" id="IPR004401">
    <property type="entry name" value="YbaB/EbfC"/>
</dbReference>
<dbReference type="NCBIfam" id="TIGR00103">
    <property type="entry name" value="DNA_YbaB_EbfC"/>
    <property type="match status" value="1"/>
</dbReference>
<dbReference type="PANTHER" id="PTHR33449">
    <property type="entry name" value="NUCLEOID-ASSOCIATED PROTEIN YBAB"/>
    <property type="match status" value="1"/>
</dbReference>
<dbReference type="PANTHER" id="PTHR33449:SF1">
    <property type="entry name" value="NUCLEOID-ASSOCIATED PROTEIN YBAB"/>
    <property type="match status" value="1"/>
</dbReference>
<dbReference type="Pfam" id="PF02575">
    <property type="entry name" value="YbaB_DNA_bd"/>
    <property type="match status" value="1"/>
</dbReference>
<dbReference type="PIRSF" id="PIRSF004555">
    <property type="entry name" value="UCP004555"/>
    <property type="match status" value="1"/>
</dbReference>
<dbReference type="SUPFAM" id="SSF82607">
    <property type="entry name" value="YbaB-like"/>
    <property type="match status" value="1"/>
</dbReference>
<name>Y1036_RALPJ</name>
<reference key="1">
    <citation type="submission" date="2008-05" db="EMBL/GenBank/DDBJ databases">
        <title>Complete sequence of chromosome 1 of Ralstonia pickettii 12J.</title>
        <authorList>
            <person name="Lucas S."/>
            <person name="Copeland A."/>
            <person name="Lapidus A."/>
            <person name="Glavina del Rio T."/>
            <person name="Dalin E."/>
            <person name="Tice H."/>
            <person name="Bruce D."/>
            <person name="Goodwin L."/>
            <person name="Pitluck S."/>
            <person name="Meincke L."/>
            <person name="Brettin T."/>
            <person name="Detter J.C."/>
            <person name="Han C."/>
            <person name="Kuske C.R."/>
            <person name="Schmutz J."/>
            <person name="Larimer F."/>
            <person name="Land M."/>
            <person name="Hauser L."/>
            <person name="Kyrpides N."/>
            <person name="Mikhailova N."/>
            <person name="Marsh T."/>
            <person name="Richardson P."/>
        </authorList>
    </citation>
    <scope>NUCLEOTIDE SEQUENCE [LARGE SCALE GENOMIC DNA]</scope>
    <source>
        <strain>12J</strain>
    </source>
</reference>
<protein>
    <recommendedName>
        <fullName evidence="1">Nucleoid-associated protein Rpic_1036</fullName>
    </recommendedName>
</protein>
<proteinExistence type="inferred from homology"/>
<comment type="function">
    <text evidence="1">Binds to DNA and alters its conformation. May be involved in regulation of gene expression, nucleoid organization and DNA protection.</text>
</comment>
<comment type="subunit">
    <text evidence="1">Homodimer.</text>
</comment>
<comment type="subcellular location">
    <subcellularLocation>
        <location evidence="1">Cytoplasm</location>
        <location evidence="1">Nucleoid</location>
    </subcellularLocation>
</comment>
<comment type="similarity">
    <text evidence="1">Belongs to the YbaB/EbfC family.</text>
</comment>
<organism>
    <name type="scientific">Ralstonia pickettii (strain 12J)</name>
    <dbReference type="NCBI Taxonomy" id="402626"/>
    <lineage>
        <taxon>Bacteria</taxon>
        <taxon>Pseudomonadati</taxon>
        <taxon>Pseudomonadota</taxon>
        <taxon>Betaproteobacteria</taxon>
        <taxon>Burkholderiales</taxon>
        <taxon>Burkholderiaceae</taxon>
        <taxon>Ralstonia</taxon>
    </lineage>
</organism>
<gene>
    <name type="ordered locus">Rpic_1036</name>
</gene>
<feature type="chain" id="PRO_1000114636" description="Nucleoid-associated protein Rpic_1036">
    <location>
        <begin position="1"/>
        <end position="115"/>
    </location>
</feature>
<keyword id="KW-0963">Cytoplasm</keyword>
<keyword id="KW-0238">DNA-binding</keyword>
<accession>B2U9S6</accession>
<sequence length="115" mass="12239">MMKGQIAGLMKQAQQMQENMKKAQEQLALIEVEGVSGAGLVKVVMTCKNDVKRVSIDPSLLAEGEDKDLLEDLIAAAFNDAVRKAEATTQEKMGSLTSGLGGMAGMLPPGFKLPF</sequence>
<evidence type="ECO:0000255" key="1">
    <source>
        <dbReference type="HAMAP-Rule" id="MF_00274"/>
    </source>
</evidence>